<proteinExistence type="evidence at protein level"/>
<accession>K7QHS5</accession>
<reference key="1">
    <citation type="journal article" date="2013" name="BMC Plant Biol.">
        <title>Transcriptome analysis of bitter acid biosynthesis and precursor pathways in hop (Humulus lupulus).</title>
        <authorList>
            <person name="Clark S.M."/>
            <person name="Vaitheeswaran V."/>
            <person name="Ambrose S.J."/>
            <person name="Purves R.W."/>
            <person name="Page J.E."/>
        </authorList>
    </citation>
    <scope>NUCLEOTIDE SEQUENCE [LARGE SCALE MRNA]</scope>
    <scope>TISSUE SPECIFICITY</scope>
    <scope>FUNCTION</scope>
    <scope>CATALYTIC ACTIVITY</scope>
    <scope>BIOPHYSICOCHEMICAL PROPERTIES</scope>
    <scope>SUBCELLULAR LOCATION</scope>
</reference>
<organism>
    <name type="scientific">Humulus lupulus</name>
    <name type="common">European hop</name>
    <dbReference type="NCBI Taxonomy" id="3486"/>
    <lineage>
        <taxon>Eukaryota</taxon>
        <taxon>Viridiplantae</taxon>
        <taxon>Streptophyta</taxon>
        <taxon>Embryophyta</taxon>
        <taxon>Tracheophyta</taxon>
        <taxon>Spermatophyta</taxon>
        <taxon>Magnoliopsida</taxon>
        <taxon>eudicotyledons</taxon>
        <taxon>Gunneridae</taxon>
        <taxon>Pentapetalae</taxon>
        <taxon>rosids</taxon>
        <taxon>fabids</taxon>
        <taxon>Rosales</taxon>
        <taxon>Cannabaceae</taxon>
        <taxon>Humulus</taxon>
    </lineage>
</organism>
<feature type="transit peptide" description="Chloroplast" evidence="2">
    <location>
        <begin position="1"/>
        <end position="58"/>
    </location>
</feature>
<feature type="chain" id="PRO_0000439268" description="Branched-chain amino acid aminotransferase 2, chloroplastic" evidence="2">
    <location>
        <begin position="59"/>
        <end position="408"/>
    </location>
</feature>
<feature type="active site" description="Proton acceptor" evidence="1">
    <location>
        <position position="254"/>
    </location>
</feature>
<feature type="binding site" evidence="1">
    <location>
        <position position="152"/>
    </location>
    <ligand>
        <name>pyridoxal 5'-phosphate</name>
        <dbReference type="ChEBI" id="CHEBI:597326"/>
    </ligand>
</feature>
<feature type="binding site" evidence="1">
    <location>
        <position position="290"/>
    </location>
    <ligand>
        <name>pyridoxal 5'-phosphate</name>
        <dbReference type="ChEBI" id="CHEBI:597326"/>
    </ligand>
</feature>
<feature type="modified residue" description="N6-(pyridoxal phosphate)lysine" evidence="1">
    <location>
        <position position="254"/>
    </location>
</feature>
<name>BCAT2_HUMLU</name>
<dbReference type="EC" id="2.6.1.42" evidence="4"/>
<dbReference type="EMBL" id="JQ063074">
    <property type="protein sequence ID" value="AFU07635.1"/>
    <property type="molecule type" value="mRNA"/>
</dbReference>
<dbReference type="SMR" id="K7QHS5"/>
<dbReference type="UniPathway" id="UPA00047">
    <property type="reaction ID" value="UER00058"/>
</dbReference>
<dbReference type="UniPathway" id="UPA00048">
    <property type="reaction ID" value="UER00073"/>
</dbReference>
<dbReference type="UniPathway" id="UPA00049">
    <property type="reaction ID" value="UER00062"/>
</dbReference>
<dbReference type="GO" id="GO:0009507">
    <property type="term" value="C:chloroplast"/>
    <property type="evidence" value="ECO:0007669"/>
    <property type="project" value="UniProtKB-SubCell"/>
</dbReference>
<dbReference type="GO" id="GO:0052656">
    <property type="term" value="F:L-isoleucine-2-oxoglutarate transaminase activity"/>
    <property type="evidence" value="ECO:0007669"/>
    <property type="project" value="RHEA"/>
</dbReference>
<dbReference type="GO" id="GO:0052654">
    <property type="term" value="F:L-leucine-2-oxoglutarate transaminase activity"/>
    <property type="evidence" value="ECO:0007669"/>
    <property type="project" value="RHEA"/>
</dbReference>
<dbReference type="GO" id="GO:0052655">
    <property type="term" value="F:L-valine-2-oxoglutarate transaminase activity"/>
    <property type="evidence" value="ECO:0007669"/>
    <property type="project" value="RHEA"/>
</dbReference>
<dbReference type="GO" id="GO:0009097">
    <property type="term" value="P:isoleucine biosynthetic process"/>
    <property type="evidence" value="ECO:0007669"/>
    <property type="project" value="UniProtKB-UniPathway"/>
</dbReference>
<dbReference type="GO" id="GO:0009098">
    <property type="term" value="P:L-leucine biosynthetic process"/>
    <property type="evidence" value="ECO:0007669"/>
    <property type="project" value="UniProtKB-UniPathway"/>
</dbReference>
<dbReference type="GO" id="GO:0009099">
    <property type="term" value="P:L-valine biosynthetic process"/>
    <property type="evidence" value="ECO:0007669"/>
    <property type="project" value="UniProtKB-UniPathway"/>
</dbReference>
<dbReference type="CDD" id="cd01557">
    <property type="entry name" value="BCAT_beta_family"/>
    <property type="match status" value="1"/>
</dbReference>
<dbReference type="FunFam" id="3.20.10.10:FF:000003">
    <property type="entry name" value="Branched-chain-amino-acid aminotransferase"/>
    <property type="match status" value="1"/>
</dbReference>
<dbReference type="FunFam" id="3.30.470.10:FF:000003">
    <property type="entry name" value="Branched-chain-amino-acid aminotransferase"/>
    <property type="match status" value="1"/>
</dbReference>
<dbReference type="Gene3D" id="3.30.470.10">
    <property type="match status" value="1"/>
</dbReference>
<dbReference type="Gene3D" id="3.20.10.10">
    <property type="entry name" value="D-amino Acid Aminotransferase, subunit A, domain 2"/>
    <property type="match status" value="1"/>
</dbReference>
<dbReference type="InterPro" id="IPR001544">
    <property type="entry name" value="Aminotrans_IV"/>
</dbReference>
<dbReference type="InterPro" id="IPR018300">
    <property type="entry name" value="Aminotrans_IV_CS"/>
</dbReference>
<dbReference type="InterPro" id="IPR036038">
    <property type="entry name" value="Aminotransferase-like"/>
</dbReference>
<dbReference type="InterPro" id="IPR005786">
    <property type="entry name" value="B_amino_transII"/>
</dbReference>
<dbReference type="InterPro" id="IPR043132">
    <property type="entry name" value="BCAT-like_C"/>
</dbReference>
<dbReference type="InterPro" id="IPR043131">
    <property type="entry name" value="BCAT-like_N"/>
</dbReference>
<dbReference type="InterPro" id="IPR033939">
    <property type="entry name" value="BCAT_family"/>
</dbReference>
<dbReference type="NCBIfam" id="TIGR01123">
    <property type="entry name" value="ilvE_II"/>
    <property type="match status" value="1"/>
</dbReference>
<dbReference type="NCBIfam" id="NF009897">
    <property type="entry name" value="PRK13357.1"/>
    <property type="match status" value="1"/>
</dbReference>
<dbReference type="PANTHER" id="PTHR42825">
    <property type="entry name" value="AMINO ACID AMINOTRANSFERASE"/>
    <property type="match status" value="1"/>
</dbReference>
<dbReference type="PANTHER" id="PTHR42825:SF2">
    <property type="entry name" value="BRANCHED-CHAIN-AMINO-ACID AMINOTRANSFERASE 3, CHLOROPLASTIC-RELATED"/>
    <property type="match status" value="1"/>
</dbReference>
<dbReference type="Pfam" id="PF01063">
    <property type="entry name" value="Aminotran_4"/>
    <property type="match status" value="1"/>
</dbReference>
<dbReference type="PIRSF" id="PIRSF006468">
    <property type="entry name" value="BCAT1"/>
    <property type="match status" value="1"/>
</dbReference>
<dbReference type="SUPFAM" id="SSF56752">
    <property type="entry name" value="D-aminoacid aminotransferase-like PLP-dependent enzymes"/>
    <property type="match status" value="1"/>
</dbReference>
<dbReference type="PROSITE" id="PS00770">
    <property type="entry name" value="AA_TRANSFER_CLASS_4"/>
    <property type="match status" value="1"/>
</dbReference>
<keyword id="KW-0028">Amino-acid biosynthesis</keyword>
<keyword id="KW-0032">Aminotransferase</keyword>
<keyword id="KW-0100">Branched-chain amino acid biosynthesis</keyword>
<keyword id="KW-0150">Chloroplast</keyword>
<keyword id="KW-0934">Plastid</keyword>
<keyword id="KW-0663">Pyridoxal phosphate</keyword>
<keyword id="KW-0808">Transferase</keyword>
<keyword id="KW-0809">Transit peptide</keyword>
<gene>
    <name evidence="5" type="primary">BCAT2</name>
</gene>
<protein>
    <recommendedName>
        <fullName evidence="5">Branched-chain amino acid aminotransferase 2, chloroplastic</fullName>
        <shortName evidence="5">HlBCAT2</shortName>
        <ecNumber evidence="4">2.6.1.42</ecNumber>
    </recommendedName>
</protein>
<evidence type="ECO:0000250" key="1">
    <source>
        <dbReference type="UniProtKB" id="P19938"/>
    </source>
</evidence>
<evidence type="ECO:0000255" key="2"/>
<evidence type="ECO:0000255" key="3">
    <source>
        <dbReference type="RuleBase" id="RU004516"/>
    </source>
</evidence>
<evidence type="ECO:0000269" key="4">
    <source>
    </source>
</evidence>
<evidence type="ECO:0000303" key="5">
    <source>
    </source>
</evidence>
<evidence type="ECO:0000305" key="6"/>
<sequence>MDCAAALLPGFHPNYLLCPSRHFSSLLPKTDLSSPLKFQLQNKQLSLASSHGFSPVICNATLSDTYSETVELADIDWDNLGFGFLPTDYMYNMKCAQGESFSNGELQRFGNIELSPSAGVLNYGQGLFEGLKAYRKEDGNILLFRPEENALRMRLGAERMCMPSPTVDQFVDAVKATVLANKRWIPPVGKGSLYIRPLLMGSGAVLGLAPAPEYTFLIYVSPVGNYFKEGVAPIHLIVEDNLHRATPGGTGGVKTIGNYAAVLKAQSAAKEQGYSDVLYLDCVHKKYLEEVSSCNIFVVKGNLIFTPAIKGTILPGITRKSIIDVARTLGFQVEERLVHVDELLDADEVFCTGTAVVVSPVGSITYHGERVPYNEGGVGAVSQQLYSALTRLQMGFIKDNMNWTVELS</sequence>
<comment type="function">
    <text evidence="4">Converts 2-oxo acids to branched-chain amino acids. Shows no kinetic preferences corresponding to anabolic or catabolic functions, but likely involved in BCAA biosynthesis.</text>
</comment>
<comment type="catalytic activity">
    <reaction evidence="4">
        <text>L-isoleucine + 2-oxoglutarate = (S)-3-methyl-2-oxopentanoate + L-glutamate</text>
        <dbReference type="Rhea" id="RHEA:24801"/>
        <dbReference type="ChEBI" id="CHEBI:16810"/>
        <dbReference type="ChEBI" id="CHEBI:29985"/>
        <dbReference type="ChEBI" id="CHEBI:35146"/>
        <dbReference type="ChEBI" id="CHEBI:58045"/>
        <dbReference type="EC" id="2.6.1.42"/>
    </reaction>
</comment>
<comment type="catalytic activity">
    <reaction evidence="4">
        <text>L-leucine + 2-oxoglutarate = 4-methyl-2-oxopentanoate + L-glutamate</text>
        <dbReference type="Rhea" id="RHEA:18321"/>
        <dbReference type="ChEBI" id="CHEBI:16810"/>
        <dbReference type="ChEBI" id="CHEBI:17865"/>
        <dbReference type="ChEBI" id="CHEBI:29985"/>
        <dbReference type="ChEBI" id="CHEBI:57427"/>
        <dbReference type="EC" id="2.6.1.42"/>
    </reaction>
</comment>
<comment type="catalytic activity">
    <reaction evidence="4">
        <text>L-valine + 2-oxoglutarate = 3-methyl-2-oxobutanoate + L-glutamate</text>
        <dbReference type="Rhea" id="RHEA:24813"/>
        <dbReference type="ChEBI" id="CHEBI:11851"/>
        <dbReference type="ChEBI" id="CHEBI:16810"/>
        <dbReference type="ChEBI" id="CHEBI:29985"/>
        <dbReference type="ChEBI" id="CHEBI:57762"/>
        <dbReference type="EC" id="2.6.1.42"/>
    </reaction>
</comment>
<comment type="cofactor">
    <cofactor evidence="3">
        <name>pyridoxal 5'-phosphate</name>
        <dbReference type="ChEBI" id="CHEBI:597326"/>
    </cofactor>
</comment>
<comment type="biophysicochemical properties">
    <kinetics>
        <KM evidence="4">690 uM for glutamate</KM>
        <KM evidence="4">120 uM for ketoisocarpoate</KM>
        <KM evidence="4">160 uM for ketoisomethylvalerate</KM>
        <KM evidence="4">200 uM for ketoisovalerate</KM>
        <KM evidence="4">210 uM for 2-oxoglutarate</KM>
        <KM evidence="4">280 uM for leucine</KM>
        <KM evidence="4">250 uM for isoleucine</KM>
        <KM evidence="4">130 uM for valine</KM>
        <Vmax evidence="4">135.9 umol/min/mg enzyme with glutamate as substrate</Vmax>
        <Vmax evidence="4">119.2 umol/min/mg enzyme with ketoisocarpoate as substrate</Vmax>
        <Vmax evidence="4">84.68 umol/min/mg enzyme with ketoisomethylvalerate as substrate</Vmax>
        <Vmax evidence="4">96.38 umol/min/mg enzyme with ketoisovalerate as substrate</Vmax>
        <Vmax evidence="4">36.92 umol/min/mg enzyme with 2-oxoglutarate as substrate</Vmax>
        <Vmax evidence="4">43.43 umol/min/mg enzyme with leucine as substrate</Vmax>
        <Vmax evidence="4">88.08 umol/min/mg enzyme with isoleucine as substrate</Vmax>
        <Vmax evidence="4">23.29 umol/min/mg enzyme with valine as substrate</Vmax>
    </kinetics>
</comment>
<comment type="pathway">
    <text evidence="6">Amino-acid biosynthesis; L-isoleucine biosynthesis; L-isoleucine from 2-oxobutanoate: step 4/4.</text>
</comment>
<comment type="pathway">
    <text evidence="6">Amino-acid biosynthesis; L-leucine biosynthesis; L-leucine from 3-methyl-2-oxobutanoate: step 4/4.</text>
</comment>
<comment type="pathway">
    <text evidence="6">Amino-acid biosynthesis; L-valine biosynthesis; L-valine from pyruvate: step 4/4.</text>
</comment>
<comment type="subcellular location">
    <subcellularLocation>
        <location evidence="4">Plastid</location>
        <location evidence="4">Chloroplast</location>
    </subcellularLocation>
</comment>
<comment type="tissue specificity">
    <text evidence="4">Expressed in lupulin glands and leaves.</text>
</comment>
<comment type="miscellaneous">
    <text evidence="6">Branched-chain amino acids are synthesized in chloroplasts, whereas the degradation takes place in mitochondria.</text>
</comment>
<comment type="similarity">
    <text evidence="6">Belongs to the class-IV pyridoxal-phosphate-dependent aminotransferase family.</text>
</comment>